<accession>A1A0T0</accession>
<dbReference type="EMBL" id="AP009256">
    <property type="protein sequence ID" value="BAF39313.1"/>
    <property type="molecule type" value="Genomic_DNA"/>
</dbReference>
<dbReference type="RefSeq" id="WP_003808605.1">
    <property type="nucleotide sequence ID" value="NZ_CAXVNC010000001.1"/>
</dbReference>
<dbReference type="SMR" id="A1A0T0"/>
<dbReference type="STRING" id="367928.BAD_0532"/>
<dbReference type="PaxDb" id="1680-BADO_0544"/>
<dbReference type="GeneID" id="4557240"/>
<dbReference type="KEGG" id="bad:BAD_0532"/>
<dbReference type="HOGENOM" id="CLU_002794_4_1_11"/>
<dbReference type="Proteomes" id="UP000008702">
    <property type="component" value="Chromosome"/>
</dbReference>
<dbReference type="GO" id="GO:0005737">
    <property type="term" value="C:cytoplasm"/>
    <property type="evidence" value="ECO:0007669"/>
    <property type="project" value="UniProtKB-SubCell"/>
</dbReference>
<dbReference type="GO" id="GO:0005525">
    <property type="term" value="F:GTP binding"/>
    <property type="evidence" value="ECO:0007669"/>
    <property type="project" value="UniProtKB-UniRule"/>
</dbReference>
<dbReference type="GO" id="GO:0003924">
    <property type="term" value="F:GTPase activity"/>
    <property type="evidence" value="ECO:0007669"/>
    <property type="project" value="InterPro"/>
</dbReference>
<dbReference type="GO" id="GO:0003746">
    <property type="term" value="F:translation elongation factor activity"/>
    <property type="evidence" value="ECO:0007669"/>
    <property type="project" value="UniProtKB-UniRule"/>
</dbReference>
<dbReference type="GO" id="GO:0032790">
    <property type="term" value="P:ribosome disassembly"/>
    <property type="evidence" value="ECO:0007669"/>
    <property type="project" value="TreeGrafter"/>
</dbReference>
<dbReference type="CDD" id="cd01886">
    <property type="entry name" value="EF-G"/>
    <property type="match status" value="1"/>
</dbReference>
<dbReference type="CDD" id="cd16262">
    <property type="entry name" value="EFG_III"/>
    <property type="match status" value="1"/>
</dbReference>
<dbReference type="CDD" id="cd01434">
    <property type="entry name" value="EFG_mtEFG1_IV"/>
    <property type="match status" value="1"/>
</dbReference>
<dbReference type="CDD" id="cd03713">
    <property type="entry name" value="EFG_mtEFG_C"/>
    <property type="match status" value="1"/>
</dbReference>
<dbReference type="CDD" id="cd04088">
    <property type="entry name" value="EFG_mtEFG_II"/>
    <property type="match status" value="1"/>
</dbReference>
<dbReference type="FunFam" id="2.40.30.10:FF:000006">
    <property type="entry name" value="Elongation factor G"/>
    <property type="match status" value="1"/>
</dbReference>
<dbReference type="FunFam" id="3.30.230.10:FF:000003">
    <property type="entry name" value="Elongation factor G"/>
    <property type="match status" value="1"/>
</dbReference>
<dbReference type="FunFam" id="3.30.70.240:FF:000001">
    <property type="entry name" value="Elongation factor G"/>
    <property type="match status" value="1"/>
</dbReference>
<dbReference type="FunFam" id="3.30.70.870:FF:000001">
    <property type="entry name" value="Elongation factor G"/>
    <property type="match status" value="1"/>
</dbReference>
<dbReference type="FunFam" id="3.40.50.300:FF:000029">
    <property type="entry name" value="Elongation factor G"/>
    <property type="match status" value="1"/>
</dbReference>
<dbReference type="Gene3D" id="3.30.230.10">
    <property type="match status" value="1"/>
</dbReference>
<dbReference type="Gene3D" id="3.30.70.240">
    <property type="match status" value="1"/>
</dbReference>
<dbReference type="Gene3D" id="3.30.70.870">
    <property type="entry name" value="Elongation Factor G (Translational Gtpase), domain 3"/>
    <property type="match status" value="1"/>
</dbReference>
<dbReference type="Gene3D" id="3.40.50.300">
    <property type="entry name" value="P-loop containing nucleotide triphosphate hydrolases"/>
    <property type="match status" value="1"/>
</dbReference>
<dbReference type="Gene3D" id="2.40.30.10">
    <property type="entry name" value="Translation factors"/>
    <property type="match status" value="1"/>
</dbReference>
<dbReference type="HAMAP" id="MF_00054_B">
    <property type="entry name" value="EF_G_EF_2_B"/>
    <property type="match status" value="1"/>
</dbReference>
<dbReference type="InterPro" id="IPR041095">
    <property type="entry name" value="EFG_II"/>
</dbReference>
<dbReference type="InterPro" id="IPR009022">
    <property type="entry name" value="EFG_III"/>
</dbReference>
<dbReference type="InterPro" id="IPR035647">
    <property type="entry name" value="EFG_III/V"/>
</dbReference>
<dbReference type="InterPro" id="IPR047872">
    <property type="entry name" value="EFG_IV"/>
</dbReference>
<dbReference type="InterPro" id="IPR035649">
    <property type="entry name" value="EFG_V"/>
</dbReference>
<dbReference type="InterPro" id="IPR000640">
    <property type="entry name" value="EFG_V-like"/>
</dbReference>
<dbReference type="InterPro" id="IPR004161">
    <property type="entry name" value="EFTu-like_2"/>
</dbReference>
<dbReference type="InterPro" id="IPR031157">
    <property type="entry name" value="G_TR_CS"/>
</dbReference>
<dbReference type="InterPro" id="IPR027417">
    <property type="entry name" value="P-loop_NTPase"/>
</dbReference>
<dbReference type="InterPro" id="IPR020568">
    <property type="entry name" value="Ribosomal_Su5_D2-typ_SF"/>
</dbReference>
<dbReference type="InterPro" id="IPR014721">
    <property type="entry name" value="Ribsml_uS5_D2-typ_fold_subgr"/>
</dbReference>
<dbReference type="InterPro" id="IPR005225">
    <property type="entry name" value="Small_GTP-bd"/>
</dbReference>
<dbReference type="InterPro" id="IPR000795">
    <property type="entry name" value="T_Tr_GTP-bd_dom"/>
</dbReference>
<dbReference type="InterPro" id="IPR009000">
    <property type="entry name" value="Transl_B-barrel_sf"/>
</dbReference>
<dbReference type="InterPro" id="IPR004540">
    <property type="entry name" value="Transl_elong_EFG/EF2"/>
</dbReference>
<dbReference type="InterPro" id="IPR005517">
    <property type="entry name" value="Transl_elong_EFG/EF2_IV"/>
</dbReference>
<dbReference type="NCBIfam" id="TIGR00484">
    <property type="entry name" value="EF-G"/>
    <property type="match status" value="1"/>
</dbReference>
<dbReference type="NCBIfam" id="NF009381">
    <property type="entry name" value="PRK12740.1-5"/>
    <property type="match status" value="1"/>
</dbReference>
<dbReference type="NCBIfam" id="TIGR00231">
    <property type="entry name" value="small_GTP"/>
    <property type="match status" value="1"/>
</dbReference>
<dbReference type="PANTHER" id="PTHR43261:SF1">
    <property type="entry name" value="RIBOSOME-RELEASING FACTOR 2, MITOCHONDRIAL"/>
    <property type="match status" value="1"/>
</dbReference>
<dbReference type="PANTHER" id="PTHR43261">
    <property type="entry name" value="TRANSLATION ELONGATION FACTOR G-RELATED"/>
    <property type="match status" value="1"/>
</dbReference>
<dbReference type="Pfam" id="PF00679">
    <property type="entry name" value="EFG_C"/>
    <property type="match status" value="1"/>
</dbReference>
<dbReference type="Pfam" id="PF14492">
    <property type="entry name" value="EFG_III"/>
    <property type="match status" value="1"/>
</dbReference>
<dbReference type="Pfam" id="PF03764">
    <property type="entry name" value="EFG_IV"/>
    <property type="match status" value="1"/>
</dbReference>
<dbReference type="Pfam" id="PF00009">
    <property type="entry name" value="GTP_EFTU"/>
    <property type="match status" value="1"/>
</dbReference>
<dbReference type="Pfam" id="PF03144">
    <property type="entry name" value="GTP_EFTU_D2"/>
    <property type="match status" value="1"/>
</dbReference>
<dbReference type="PRINTS" id="PR00315">
    <property type="entry name" value="ELONGATNFCT"/>
</dbReference>
<dbReference type="SMART" id="SM00838">
    <property type="entry name" value="EFG_C"/>
    <property type="match status" value="1"/>
</dbReference>
<dbReference type="SMART" id="SM00889">
    <property type="entry name" value="EFG_IV"/>
    <property type="match status" value="1"/>
</dbReference>
<dbReference type="SUPFAM" id="SSF54980">
    <property type="entry name" value="EF-G C-terminal domain-like"/>
    <property type="match status" value="2"/>
</dbReference>
<dbReference type="SUPFAM" id="SSF52540">
    <property type="entry name" value="P-loop containing nucleoside triphosphate hydrolases"/>
    <property type="match status" value="1"/>
</dbReference>
<dbReference type="SUPFAM" id="SSF54211">
    <property type="entry name" value="Ribosomal protein S5 domain 2-like"/>
    <property type="match status" value="1"/>
</dbReference>
<dbReference type="SUPFAM" id="SSF50447">
    <property type="entry name" value="Translation proteins"/>
    <property type="match status" value="1"/>
</dbReference>
<dbReference type="PROSITE" id="PS00301">
    <property type="entry name" value="G_TR_1"/>
    <property type="match status" value="1"/>
</dbReference>
<dbReference type="PROSITE" id="PS51722">
    <property type="entry name" value="G_TR_2"/>
    <property type="match status" value="1"/>
</dbReference>
<protein>
    <recommendedName>
        <fullName evidence="1">Elongation factor G</fullName>
        <shortName evidence="1">EF-G</shortName>
    </recommendedName>
</protein>
<sequence>MALDVLNDLNQIRNIGIMAHIDAGKTTTTERILFYTGKNYKIGETHDGASTMDFMAQEQERGITIQSAATTCFWNRQTHDEKQKFQINIIDTPGHVDFTAEVERSLRVLDGAVAVFDGKEGVEPQSETVWRQADKYGVPRICFINKMDKLGADFYYSVDTIKTKLGATPLVVQLPIGAENDFAGVVDLIRMKAYVWNDVSGDLGAHYDTTDIPADLQDKAEQYRSELLDQVAESDEELLEKYLESGELTEDEIRAGIRKLTINREAYPVLCGSAFKDKGVQPMLDAVVDYLPSPEDVPSIVGFDPQDESIEIDRKPTTDDPFSALVFKISTHPFYGKLVFVRVYSGSVKPGDTVLDSTKEKKERVGKIFQMHADKENPVDAAEAGNIYTFVGLKNVTTGDTLCDEKSPISLESMTFPDPVIEVAVEPKTKADQEKMSIALAKLSDEDPTFQVKTDEESGQTLISGMGELQLDIIVDRMRREFKVECNVGNPQVAYRETIRKAVMNQEYTHKKQTGGSGQFAKVLMNFEPLDTENGETYEFVNEVTGGHITKEFIPSIDAGVQEAMESGILAGFPVVGVKATVTDGQVHDVDSSEMAFKIAGSMCFKEAAPKAKPVILEPIMAVEVRTPEEYMGDVMGDINARRGSIQSMTDSTGVKVIDAKVPLSEMFGYIGDLRSKTQGRAMFTMQMDSYAEVPKNVSEEIIKAQRGE</sequence>
<evidence type="ECO:0000255" key="1">
    <source>
        <dbReference type="HAMAP-Rule" id="MF_00054"/>
    </source>
</evidence>
<comment type="function">
    <text evidence="1">Catalyzes the GTP-dependent ribosomal translocation step during translation elongation. During this step, the ribosome changes from the pre-translocational (PRE) to the post-translocational (POST) state as the newly formed A-site-bound peptidyl-tRNA and P-site-bound deacylated tRNA move to the P and E sites, respectively. Catalyzes the coordinated movement of the two tRNA molecules, the mRNA and conformational changes in the ribosome.</text>
</comment>
<comment type="subcellular location">
    <subcellularLocation>
        <location evidence="1">Cytoplasm</location>
    </subcellularLocation>
</comment>
<comment type="similarity">
    <text evidence="1">Belongs to the TRAFAC class translation factor GTPase superfamily. Classic translation factor GTPase family. EF-G/EF-2 subfamily.</text>
</comment>
<name>EFG_BIFAA</name>
<reference key="1">
    <citation type="submission" date="2006-12" db="EMBL/GenBank/DDBJ databases">
        <title>Bifidobacterium adolescentis complete genome sequence.</title>
        <authorList>
            <person name="Suzuki T."/>
            <person name="Tsuda Y."/>
            <person name="Kanou N."/>
            <person name="Inoue T."/>
            <person name="Kumazaki K."/>
            <person name="Nagano S."/>
            <person name="Hirai S."/>
            <person name="Tanaka K."/>
            <person name="Watanabe K."/>
        </authorList>
    </citation>
    <scope>NUCLEOTIDE SEQUENCE [LARGE SCALE GENOMIC DNA]</scope>
    <source>
        <strain>ATCC 15703 / DSM 20083 / NCTC 11814 / E194a</strain>
    </source>
</reference>
<gene>
    <name evidence="1" type="primary">fusA</name>
    <name type="ordered locus">BAD_0532</name>
</gene>
<proteinExistence type="inferred from homology"/>
<feature type="chain" id="PRO_1000008804" description="Elongation factor G">
    <location>
        <begin position="1"/>
        <end position="709"/>
    </location>
</feature>
<feature type="domain" description="tr-type G">
    <location>
        <begin position="10"/>
        <end position="295"/>
    </location>
</feature>
<feature type="binding site" evidence="1">
    <location>
        <begin position="19"/>
        <end position="26"/>
    </location>
    <ligand>
        <name>GTP</name>
        <dbReference type="ChEBI" id="CHEBI:37565"/>
    </ligand>
</feature>
<feature type="binding site" evidence="1">
    <location>
        <begin position="91"/>
        <end position="95"/>
    </location>
    <ligand>
        <name>GTP</name>
        <dbReference type="ChEBI" id="CHEBI:37565"/>
    </ligand>
</feature>
<feature type="binding site" evidence="1">
    <location>
        <begin position="145"/>
        <end position="148"/>
    </location>
    <ligand>
        <name>GTP</name>
        <dbReference type="ChEBI" id="CHEBI:37565"/>
    </ligand>
</feature>
<organism>
    <name type="scientific">Bifidobacterium adolescentis (strain ATCC 15703 / DSM 20083 / NCTC 11814 / E194a)</name>
    <dbReference type="NCBI Taxonomy" id="367928"/>
    <lineage>
        <taxon>Bacteria</taxon>
        <taxon>Bacillati</taxon>
        <taxon>Actinomycetota</taxon>
        <taxon>Actinomycetes</taxon>
        <taxon>Bifidobacteriales</taxon>
        <taxon>Bifidobacteriaceae</taxon>
        <taxon>Bifidobacterium</taxon>
    </lineage>
</organism>
<keyword id="KW-0963">Cytoplasm</keyword>
<keyword id="KW-0251">Elongation factor</keyword>
<keyword id="KW-0342">GTP-binding</keyword>
<keyword id="KW-0547">Nucleotide-binding</keyword>
<keyword id="KW-0648">Protein biosynthesis</keyword>
<keyword id="KW-1185">Reference proteome</keyword>